<evidence type="ECO:0000255" key="1">
    <source>
        <dbReference type="HAMAP-Rule" id="MF_00773"/>
    </source>
</evidence>
<evidence type="ECO:0000305" key="2"/>
<keyword id="KW-0479">Metal-binding</keyword>
<keyword id="KW-0687">Ribonucleoprotein</keyword>
<keyword id="KW-0689">Ribosomal protein</keyword>
<keyword id="KW-0694">RNA-binding</keyword>
<keyword id="KW-0699">rRNA-binding</keyword>
<keyword id="KW-0862">Zinc</keyword>
<keyword id="KW-0863">Zinc-finger</keyword>
<gene>
    <name evidence="1" type="primary">rpl24e</name>
    <name type="ordered locus">PTO1282</name>
</gene>
<comment type="function">
    <text evidence="1">Binds to the 23S rRNA.</text>
</comment>
<comment type="cofactor">
    <cofactor evidence="1">
        <name>Zn(2+)</name>
        <dbReference type="ChEBI" id="CHEBI:29105"/>
    </cofactor>
    <text evidence="1">Binds 1 zinc ion per subunit.</text>
</comment>
<comment type="subunit">
    <text evidence="1">Part of the 50S ribosomal subunit. Forms a cluster with proteins L3 and L14.</text>
</comment>
<comment type="similarity">
    <text evidence="1">Belongs to the eukaryotic ribosomal protein eL24 family.</text>
</comment>
<proteinExistence type="inferred from homology"/>
<sequence>MDVRNCSFCGKSIEPASGFLYVRKDGSVLNFCSRKCKENMVKLKRVPRKVKWTNEYHRIKAMTKKA</sequence>
<protein>
    <recommendedName>
        <fullName evidence="1">Large ribosomal subunit protein eL24</fullName>
    </recommendedName>
    <alternativeName>
        <fullName evidence="2">50S ribosomal protein L24e</fullName>
    </alternativeName>
</protein>
<name>RL24E_PICTO</name>
<dbReference type="EMBL" id="AE017261">
    <property type="protein sequence ID" value="AAT43867.1"/>
    <property type="molecule type" value="Genomic_DNA"/>
</dbReference>
<dbReference type="RefSeq" id="WP_011178083.1">
    <property type="nucleotide sequence ID" value="NC_005877.1"/>
</dbReference>
<dbReference type="SMR" id="Q6KZI5"/>
<dbReference type="FunCoup" id="Q6KZI5">
    <property type="interactions" value="52"/>
</dbReference>
<dbReference type="STRING" id="263820.PTO1282"/>
<dbReference type="PaxDb" id="263820-PTO1282"/>
<dbReference type="GeneID" id="2844241"/>
<dbReference type="KEGG" id="pto:PTO1282"/>
<dbReference type="eggNOG" id="arCOG01950">
    <property type="taxonomic scope" value="Archaea"/>
</dbReference>
<dbReference type="HOGENOM" id="CLU_190191_0_0_2"/>
<dbReference type="InParanoid" id="Q6KZI5"/>
<dbReference type="OrthoDB" id="55506at2157"/>
<dbReference type="Proteomes" id="UP000000438">
    <property type="component" value="Chromosome"/>
</dbReference>
<dbReference type="GO" id="GO:1990904">
    <property type="term" value="C:ribonucleoprotein complex"/>
    <property type="evidence" value="ECO:0007669"/>
    <property type="project" value="UniProtKB-KW"/>
</dbReference>
<dbReference type="GO" id="GO:0005840">
    <property type="term" value="C:ribosome"/>
    <property type="evidence" value="ECO:0007669"/>
    <property type="project" value="UniProtKB-KW"/>
</dbReference>
<dbReference type="GO" id="GO:0019843">
    <property type="term" value="F:rRNA binding"/>
    <property type="evidence" value="ECO:0007669"/>
    <property type="project" value="UniProtKB-UniRule"/>
</dbReference>
<dbReference type="GO" id="GO:0003735">
    <property type="term" value="F:structural constituent of ribosome"/>
    <property type="evidence" value="ECO:0007669"/>
    <property type="project" value="InterPro"/>
</dbReference>
<dbReference type="GO" id="GO:0008270">
    <property type="term" value="F:zinc ion binding"/>
    <property type="evidence" value="ECO:0007669"/>
    <property type="project" value="UniProtKB-UniRule"/>
</dbReference>
<dbReference type="GO" id="GO:0006412">
    <property type="term" value="P:translation"/>
    <property type="evidence" value="ECO:0007669"/>
    <property type="project" value="UniProtKB-UniRule"/>
</dbReference>
<dbReference type="CDD" id="cd00472">
    <property type="entry name" value="Ribosomal_L24e_L24"/>
    <property type="match status" value="1"/>
</dbReference>
<dbReference type="Gene3D" id="2.30.170.20">
    <property type="entry name" value="Ribosomal protein L24e"/>
    <property type="match status" value="1"/>
</dbReference>
<dbReference type="HAMAP" id="MF_00773">
    <property type="entry name" value="Ribosomal_eL24"/>
    <property type="match status" value="1"/>
</dbReference>
<dbReference type="InterPro" id="IPR038630">
    <property type="entry name" value="L24e/L24_sf"/>
</dbReference>
<dbReference type="InterPro" id="IPR056366">
    <property type="entry name" value="Ribosomal_eL24"/>
</dbReference>
<dbReference type="InterPro" id="IPR055345">
    <property type="entry name" value="Ribosomal_eL24-rel_arc"/>
</dbReference>
<dbReference type="InterPro" id="IPR000988">
    <property type="entry name" value="Ribosomal_eL24-rel_N"/>
</dbReference>
<dbReference type="InterPro" id="IPR023442">
    <property type="entry name" value="Ribosomal_eL24_CS"/>
</dbReference>
<dbReference type="InterPro" id="IPR011017">
    <property type="entry name" value="TRASH_dom"/>
</dbReference>
<dbReference type="NCBIfam" id="NF034186">
    <property type="entry name" value="PRK14891.1-1"/>
    <property type="match status" value="1"/>
</dbReference>
<dbReference type="PANTHER" id="PTHR10792">
    <property type="entry name" value="60S RIBOSOMAL PROTEIN L24"/>
    <property type="match status" value="1"/>
</dbReference>
<dbReference type="PANTHER" id="PTHR10792:SF1">
    <property type="entry name" value="RIBOSOMAL PROTEIN L24"/>
    <property type="match status" value="1"/>
</dbReference>
<dbReference type="Pfam" id="PF01246">
    <property type="entry name" value="Ribosomal_L24e"/>
    <property type="match status" value="1"/>
</dbReference>
<dbReference type="SMART" id="SM00746">
    <property type="entry name" value="TRASH"/>
    <property type="match status" value="1"/>
</dbReference>
<dbReference type="SUPFAM" id="SSF57716">
    <property type="entry name" value="Glucocorticoid receptor-like (DNA-binding domain)"/>
    <property type="match status" value="1"/>
</dbReference>
<dbReference type="PROSITE" id="PS01073">
    <property type="entry name" value="RIBOSOMAL_L24E"/>
    <property type="match status" value="1"/>
</dbReference>
<organism>
    <name type="scientific">Picrophilus torridus (strain ATCC 700027 / DSM 9790 / JCM 10055 / NBRC 100828 / KAW 2/3)</name>
    <dbReference type="NCBI Taxonomy" id="1122961"/>
    <lineage>
        <taxon>Archaea</taxon>
        <taxon>Methanobacteriati</taxon>
        <taxon>Thermoplasmatota</taxon>
        <taxon>Thermoplasmata</taxon>
        <taxon>Thermoplasmatales</taxon>
        <taxon>Picrophilaceae</taxon>
        <taxon>Picrophilus</taxon>
    </lineage>
</organism>
<feature type="chain" id="PRO_0000136921" description="Large ribosomal subunit protein eL24">
    <location>
        <begin position="1"/>
        <end position="66"/>
    </location>
</feature>
<feature type="zinc finger region" description="C4-type" evidence="1">
    <location>
        <begin position="6"/>
        <end position="36"/>
    </location>
</feature>
<feature type="binding site" evidence="1">
    <location>
        <position position="6"/>
    </location>
    <ligand>
        <name>Zn(2+)</name>
        <dbReference type="ChEBI" id="CHEBI:29105"/>
    </ligand>
</feature>
<feature type="binding site" evidence="1">
    <location>
        <position position="9"/>
    </location>
    <ligand>
        <name>Zn(2+)</name>
        <dbReference type="ChEBI" id="CHEBI:29105"/>
    </ligand>
</feature>
<feature type="binding site" evidence="1">
    <location>
        <position position="32"/>
    </location>
    <ligand>
        <name>Zn(2+)</name>
        <dbReference type="ChEBI" id="CHEBI:29105"/>
    </ligand>
</feature>
<feature type="binding site" evidence="1">
    <location>
        <position position="36"/>
    </location>
    <ligand>
        <name>Zn(2+)</name>
        <dbReference type="ChEBI" id="CHEBI:29105"/>
    </ligand>
</feature>
<reference key="1">
    <citation type="journal article" date="2004" name="Proc. Natl. Acad. Sci. U.S.A.">
        <title>Genome sequence of Picrophilus torridus and its implications for life around pH 0.</title>
        <authorList>
            <person name="Fuetterer O."/>
            <person name="Angelov A."/>
            <person name="Liesegang H."/>
            <person name="Gottschalk G."/>
            <person name="Schleper C."/>
            <person name="Schepers B."/>
            <person name="Dock C."/>
            <person name="Antranikian G."/>
            <person name="Liebl W."/>
        </authorList>
    </citation>
    <scope>NUCLEOTIDE SEQUENCE [LARGE SCALE GENOMIC DNA]</scope>
    <source>
        <strain>ATCC 700027 / DSM 9790 / JCM 10055 / NBRC 100828 / KAW 2/3</strain>
    </source>
</reference>
<accession>Q6KZI5</accession>